<organism>
    <name type="scientific">Dictyostelium purpureum</name>
    <name type="common">Slime mold</name>
    <dbReference type="NCBI Taxonomy" id="5786"/>
    <lineage>
        <taxon>Eukaryota</taxon>
        <taxon>Amoebozoa</taxon>
        <taxon>Evosea</taxon>
        <taxon>Eumycetozoa</taxon>
        <taxon>Dictyostelia</taxon>
        <taxon>Dictyosteliales</taxon>
        <taxon>Dictyosteliaceae</taxon>
        <taxon>Dictyostelium</taxon>
    </lineage>
</organism>
<evidence type="ECO:0000250" key="1">
    <source>
        <dbReference type="UniProtKB" id="Q54BE5"/>
    </source>
</evidence>
<evidence type="ECO:0000250" key="2">
    <source>
        <dbReference type="UniProtKB" id="Q55E23"/>
    </source>
</evidence>
<evidence type="ECO:0000269" key="3">
    <source>
    </source>
</evidence>
<evidence type="ECO:0000303" key="4">
    <source>
    </source>
</evidence>
<evidence type="ECO:0000305" key="5"/>
<protein>
    <recommendedName>
        <fullName evidence="4">Terpene synthase 5</fullName>
        <ecNumber evidence="3">4.2.3.-</ecNumber>
    </recommendedName>
</protein>
<comment type="function">
    <text evidence="3">Terpene synthase that converts its substrate farnesyl diphosphate (FPP) into 2 yet unidentified sesquiterpenes.</text>
</comment>
<comment type="domain">
    <text evidence="2">Contains several highly conserved motifs that are important for catalytic activity including the aspartate-rich 'DDxx(x)D/E' motif and the 'NDxxSxxxD/E' motif, both of which are involved in complexing metal ions to coordinate the binding of the isoprenyl diphosphate substrate in the active site.</text>
</comment>
<comment type="similarity">
    <text evidence="5">Belongs to the terpene synthase family.</text>
</comment>
<feature type="chain" id="PRO_0000457022" description="Terpene synthase 5">
    <location>
        <begin position="1"/>
        <end position="360"/>
    </location>
</feature>
<feature type="short sequence motif" description="DDxx(x)D/E motif" evidence="1">
    <location>
        <begin position="87"/>
        <end position="92"/>
    </location>
</feature>
<feature type="short sequence motif" description="NDxxSxxxD/E motif" evidence="1">
    <location>
        <begin position="237"/>
        <end position="245"/>
    </location>
</feature>
<keyword id="KW-0456">Lyase</keyword>
<keyword id="KW-0479">Metal-binding</keyword>
<keyword id="KW-1185">Reference proteome</keyword>
<dbReference type="EC" id="4.2.3.-" evidence="3"/>
<dbReference type="EMBL" id="MG262466">
    <property type="protein sequence ID" value="AXN72974.1"/>
    <property type="molecule type" value="mRNA"/>
</dbReference>
<dbReference type="EMBL" id="GL871369">
    <property type="protein sequence ID" value="EGC29993.1"/>
    <property type="molecule type" value="Genomic_DNA"/>
</dbReference>
<dbReference type="RefSeq" id="XP_003293477.1">
    <property type="nucleotide sequence ID" value="XM_003293429.1"/>
</dbReference>
<dbReference type="SMR" id="F1A1D6"/>
<dbReference type="STRING" id="5786.F1A1D6"/>
<dbReference type="EnsemblProtists" id="EGC29993">
    <property type="protein sequence ID" value="EGC29993"/>
    <property type="gene ID" value="DICPUDRAFT_158345"/>
</dbReference>
<dbReference type="GeneID" id="10511400"/>
<dbReference type="KEGG" id="dpp:DICPUDRAFT_158345"/>
<dbReference type="VEuPathDB" id="AmoebaDB:DICPUDRAFT_158345"/>
<dbReference type="eggNOG" id="ENOG502RER5">
    <property type="taxonomic scope" value="Eukaryota"/>
</dbReference>
<dbReference type="InParanoid" id="F1A1D6"/>
<dbReference type="OMA" id="HFAYANG"/>
<dbReference type="OrthoDB" id="2861623at2759"/>
<dbReference type="Proteomes" id="UP000001064">
    <property type="component" value="Unassembled WGS sequence"/>
</dbReference>
<dbReference type="GO" id="GO:0046872">
    <property type="term" value="F:metal ion binding"/>
    <property type="evidence" value="ECO:0007669"/>
    <property type="project" value="UniProtKB-KW"/>
</dbReference>
<dbReference type="GO" id="GO:0010334">
    <property type="term" value="F:sesquiterpene synthase activity"/>
    <property type="evidence" value="ECO:0007669"/>
    <property type="project" value="EnsemblProtists"/>
</dbReference>
<dbReference type="GO" id="GO:0010333">
    <property type="term" value="F:terpene synthase activity"/>
    <property type="evidence" value="ECO:0000318"/>
    <property type="project" value="GO_Central"/>
</dbReference>
<dbReference type="GO" id="GO:0031150">
    <property type="term" value="P:sorocarp stalk development"/>
    <property type="evidence" value="ECO:0007669"/>
    <property type="project" value="EnsemblProtists"/>
</dbReference>
<dbReference type="GO" id="GO:0046246">
    <property type="term" value="P:terpene biosynthetic process"/>
    <property type="evidence" value="ECO:0007669"/>
    <property type="project" value="UniProtKB-ARBA"/>
</dbReference>
<dbReference type="FunFam" id="1.10.600.10:FF:000064">
    <property type="entry name" value="Terpene synthase"/>
    <property type="match status" value="1"/>
</dbReference>
<dbReference type="Gene3D" id="1.10.600.10">
    <property type="entry name" value="Farnesyl Diphosphate Synthase"/>
    <property type="match status" value="1"/>
</dbReference>
<dbReference type="InterPro" id="IPR008949">
    <property type="entry name" value="Isoprenoid_synthase_dom_sf"/>
</dbReference>
<dbReference type="InterPro" id="IPR034686">
    <property type="entry name" value="Terpene_cyclase-like_2"/>
</dbReference>
<dbReference type="PANTHER" id="PTHR35201">
    <property type="entry name" value="TERPENE SYNTHASE"/>
    <property type="match status" value="1"/>
</dbReference>
<dbReference type="PANTHER" id="PTHR35201:SF2">
    <property type="entry name" value="TERPENE SYNTHASE 1-RELATED"/>
    <property type="match status" value="1"/>
</dbReference>
<dbReference type="Pfam" id="PF19086">
    <property type="entry name" value="Terpene_syn_C_2"/>
    <property type="match status" value="1"/>
</dbReference>
<dbReference type="SUPFAM" id="SSF48576">
    <property type="entry name" value="Terpenoid synthases"/>
    <property type="match status" value="1"/>
</dbReference>
<proteinExistence type="evidence at protein level"/>
<gene>
    <name evidence="4" type="primary">TPS5</name>
    <name type="ORF">DICPUDRAFT_158345</name>
</gene>
<sequence length="360" mass="42432">MQEKPNLLSLKKFYFPKEWSYPVNTISKHIRDTFDEAVECGLFDGSNEKHFAYANGVLNCVTWFYPKYDYEQLMVAAAIMQWIFVLDDFLERDHMTDEKQQYCVRKYEDILIQGRSSPYLSTLDDCCLTPLDKYTLVLRKRLLKPSENRIETFNIFVHYLREWFFSIIPLKKSKGDHHTDSVPYEVYSFIRTINIGLYFVVGVNSVAVDTKVHGSFWINPIWQRMVRHAAKQIIIFNDCVSYAKEINHDCAGENCLYILQKKLNLSFEKVYEHVVEEAKQAIFEIQKDEVLLVETLSYLPEEQMNGVKYLIEQLREIVVGNRDWALMTPRYVHNDSPFIETRGTDPSIVPYEKILNSNLY</sequence>
<name>TPS5_DICPU</name>
<reference key="1">
    <citation type="journal article" date="2018" name="Sci. Rep.">
        <title>Diversity and Functional Evolution of Terpene Synthases in Dictyostelid Social Amoebae.</title>
        <authorList>
            <person name="Chen X."/>
            <person name="Kollner T.G."/>
            <person name="Shaulsky G."/>
            <person name="Jia Q."/>
            <person name="Dickschat J.S."/>
            <person name="Gershenzon J."/>
            <person name="Chen F."/>
        </authorList>
    </citation>
    <scope>NUCLEOTIDE SEQUENCE [MRNA]</scope>
    <scope>FUNCTION</scope>
    <scope>CATALYTIC ACTIVITY</scope>
    <source>
        <strain>AX1</strain>
    </source>
</reference>
<reference key="2">
    <citation type="journal article" date="2011" name="Genome Biol.">
        <title>Comparative genomics of the social amoebae Dictyostelium discoideum and Dictyostelium purpureum.</title>
        <authorList>
            <consortium name="US DOE Joint Genome Institute (JGI-PGF)"/>
            <person name="Sucgang R."/>
            <person name="Kuo A."/>
            <person name="Tian X."/>
            <person name="Salerno W."/>
            <person name="Parikh A."/>
            <person name="Feasley C.L."/>
            <person name="Dalin E."/>
            <person name="Tu H."/>
            <person name="Huang E."/>
            <person name="Barry K."/>
            <person name="Lindquist E."/>
            <person name="Shapiro H."/>
            <person name="Bruce D."/>
            <person name="Schmutz J."/>
            <person name="Salamov A."/>
            <person name="Fey P."/>
            <person name="Gaudet P."/>
            <person name="Anjard C."/>
            <person name="Babu M.M."/>
            <person name="Basu S."/>
            <person name="Bushmanova Y."/>
            <person name="van der Wel H."/>
            <person name="Katoh-Kurasawa M."/>
            <person name="Dinh C."/>
            <person name="Coutinho P.M."/>
            <person name="Saito T."/>
            <person name="Elias M."/>
            <person name="Schaap P."/>
            <person name="Kay R.R."/>
            <person name="Henrissat B."/>
            <person name="Eichinger L."/>
            <person name="Rivero F."/>
            <person name="Putnam N.H."/>
            <person name="West C.M."/>
            <person name="Loomis W.F."/>
            <person name="Chisholm R.L."/>
            <person name="Shaulsky G."/>
            <person name="Strassmann J.E."/>
            <person name="Queller D.C."/>
            <person name="Kuspa A."/>
            <person name="Grigoriev I.V."/>
        </authorList>
    </citation>
    <scope>NUCLEOTIDE SEQUENCE [LARGE SCALE GENOMIC DNA]</scope>
    <source>
        <strain>QSDP1</strain>
    </source>
</reference>
<accession>F1A1D6</accession>